<organism>
    <name type="scientific">Candida tsukubaensis</name>
    <name type="common">Yeast</name>
    <name type="synonym">Pseudozyma tsukubaensis</name>
    <dbReference type="NCBI Taxonomy" id="5483"/>
    <lineage>
        <taxon>Eukaryota</taxon>
        <taxon>Fungi</taxon>
        <taxon>Dikarya</taxon>
        <taxon>Basidiomycota</taxon>
        <taxon>Ustilaginomycotina</taxon>
        <taxon>Ustilaginomycetes</taxon>
        <taxon>Ustilaginales</taxon>
        <taxon>Ustilaginaceae</taxon>
        <taxon>Pseudozyma</taxon>
    </lineage>
</organism>
<protein>
    <recommendedName>
        <fullName>Alpha-glucosidase</fullName>
        <ecNumber>3.2.1.20</ecNumber>
    </recommendedName>
    <alternativeName>
        <fullName>Maltase</fullName>
    </alternativeName>
    <component>
        <recommendedName>
            <fullName>Alpha-glucosidase subunit 1</fullName>
        </recommendedName>
    </component>
    <component>
        <recommendedName>
            <fullName>Alpha-glucosidase subunit 2</fullName>
        </recommendedName>
    </component>
</protein>
<comment type="function">
    <text>Hydrolyzes a broad range of alpha-D-linked glucopyranosides, including maltose (alpha-1,4), sucrose (alpha-1,2), isomaltose (alpha-1,6) and turanose (alpha-1,3).</text>
</comment>
<comment type="catalytic activity">
    <reaction>
        <text>Hydrolysis of terminal, non-reducing (1-&gt;4)-linked alpha-D-glucose residues with release of alpha-D-glucose.</text>
        <dbReference type="EC" id="3.2.1.20"/>
    </reaction>
</comment>
<comment type="similarity">
    <text evidence="5">Belongs to the glycosyl hydrolase 31 family.</text>
</comment>
<feature type="signal peptide" evidence="4">
    <location>
        <begin position="1"/>
        <end position="35"/>
    </location>
</feature>
<feature type="chain" id="PRO_0000018578" description="Alpha-glucosidase subunit 1">
    <location>
        <begin position="36"/>
        <end position="612"/>
    </location>
</feature>
<feature type="chain" id="PRO_0000018579" description="Alpha-glucosidase subunit 2">
    <location>
        <begin position="613"/>
        <end position="1070"/>
    </location>
</feature>
<feature type="active site" description="Nucleophile" evidence="3">
    <location>
        <position position="526"/>
    </location>
</feature>
<feature type="active site" evidence="1">
    <location>
        <position position="529"/>
    </location>
</feature>
<feature type="active site" description="Proton donor" evidence="1">
    <location>
        <position position="730"/>
    </location>
</feature>
<feature type="glycosylation site" description="N-linked (GlcNAc...) asparagine" evidence="2">
    <location>
        <position position="48"/>
    </location>
</feature>
<feature type="glycosylation site" description="N-linked (GlcNAc...) asparagine" evidence="2">
    <location>
        <position position="99"/>
    </location>
</feature>
<feature type="glycosylation site" description="N-linked (GlcNAc...) asparagine" evidence="2">
    <location>
        <position position="144"/>
    </location>
</feature>
<feature type="glycosylation site" description="N-linked (GlcNAc...) asparagine" evidence="2">
    <location>
        <position position="161"/>
    </location>
</feature>
<feature type="glycosylation site" description="N-linked (GlcNAc...) asparagine" evidence="2">
    <location>
        <position position="208"/>
    </location>
</feature>
<feature type="glycosylation site" description="N-linked (GlcNAc...) asparagine" evidence="2">
    <location>
        <position position="384"/>
    </location>
</feature>
<feature type="glycosylation site" description="N-linked (GlcNAc...) asparagine" evidence="2">
    <location>
        <position position="458"/>
    </location>
</feature>
<feature type="glycosylation site" description="N-linked (GlcNAc...) asparagine" evidence="2">
    <location>
        <position position="480"/>
    </location>
</feature>
<feature type="glycosylation site" description="N-linked (GlcNAc...) asparagine" evidence="2">
    <location>
        <position position="513"/>
    </location>
</feature>
<feature type="glycosylation site" description="N-linked (GlcNAc...) asparagine" evidence="2">
    <location>
        <position position="544"/>
    </location>
</feature>
<feature type="glycosylation site" description="N-linked (GlcNAc...) asparagine" evidence="2">
    <location>
        <position position="566"/>
    </location>
</feature>
<feature type="glycosylation site" description="N-linked (GlcNAc...) asparagine" evidence="2">
    <location>
        <position position="574"/>
    </location>
</feature>
<feature type="glycosylation site" description="N-linked (GlcNAc...) asparagine" evidence="2">
    <location>
        <position position="578"/>
    </location>
</feature>
<feature type="glycosylation site" description="N-linked (GlcNAc...) asparagine" evidence="2">
    <location>
        <position position="635"/>
    </location>
</feature>
<feature type="glycosylation site" description="N-linked (GlcNAc...) asparagine" evidence="2">
    <location>
        <position position="818"/>
    </location>
</feature>
<feature type="glycosylation site" description="N-linked (GlcNAc...) asparagine" evidence="2">
    <location>
        <position position="885"/>
    </location>
</feature>
<feature type="glycosylation site" description="N-linked (GlcNAc...) asparagine" evidence="2">
    <location>
        <position position="916"/>
    </location>
</feature>
<feature type="glycosylation site" description="N-linked (GlcNAc...) asparagine" evidence="2">
    <location>
        <position position="983"/>
    </location>
</feature>
<feature type="glycosylation site" description="N-linked (GlcNAc...) asparagine" evidence="2">
    <location>
        <position position="992"/>
    </location>
</feature>
<feature type="glycosylation site" description="N-linked (GlcNAc...) asparagine" evidence="2">
    <location>
        <position position="996"/>
    </location>
</feature>
<feature type="glycosylation site" description="N-linked (GlcNAc...) asparagine" evidence="2">
    <location>
        <position position="1008"/>
    </location>
</feature>
<feature type="glycosylation site" description="N-linked (GlcNAc...) asparagine" evidence="2">
    <location>
        <position position="1029"/>
    </location>
</feature>
<feature type="glycosylation site" description="N-linked (GlcNAc...) asparagine" evidence="2">
    <location>
        <position position="1043"/>
    </location>
</feature>
<feature type="glycosylation site" description="N-linked (GlcNAc...) asparagine" evidence="2">
    <location>
        <position position="1052"/>
    </location>
</feature>
<proteinExistence type="evidence at protein level"/>
<evidence type="ECO:0000250" key="1"/>
<evidence type="ECO:0000255" key="2"/>
<evidence type="ECO:0000255" key="3">
    <source>
        <dbReference type="PROSITE-ProRule" id="PRU10066"/>
    </source>
</evidence>
<evidence type="ECO:0000269" key="4">
    <source>
    </source>
</evidence>
<evidence type="ECO:0000305" key="5"/>
<sequence>MRSIKAASLTPLLAALFTTLSSTLALPSSVWEHQLETNVLALRDTNNNGSSSTISPSFDVTKCPGYKLVGQPQQSQHGFTAQLSLAGDACNAYGVDIANLTLSVVYEKQHQLHVHIYDTAKQQYQLPNGLIFDRPGDNPADIQNGSTADQSDLVFHHTAENGTQSGNGGWAFWIARKSSGDVIFDTRASNIPTYNDGLSSVSSNTKRNTTAMPAHEMVFENQYLQISSALPTGANIYGLGEYVTGSFRRNPDETLQPFFTLDAGTPVDSNMYGYHPIYTEARRGSDGKLRTHSVHLQNTAGMDVLLRRGVIQYRAIGGTLDFRFFSGDQPASSSSSSSGNDKAVATVKNSPNTAIQQYVNFIGNPVIHPYWSYGFHLCRWGYNNVSETQAVIDAMRQNNIPLEVQWNDIDYLQEFRDFTTDPQRFPQKEFAAMIAKLKDNHQHYIPIIDMAIPKAPTNDTDVYYPGTRGDELDVFIKNRNGSQYIGEVWPGYTNFVDQQAENAGKWWTEAIRNFSEIVDFSGIWLDMNEPSSFVIGNAAGPETNLSNTPAYTAATSVAGWPQGYNNLTWGTSGNITVNGSYTYQQGPVQNNDGSKQRRSLLLSRDEDVLVQRDINVNGGNGDKFGPEDPNYQYANSSQRYLSNPPYAIHNGIHISETPLNVNLDKKTVAMEAVGVDGQRAFYDVHNLDGTLEEQHFYNALRDIRPQERPFLISRSTYPGAGKFTGHWLGDNYALWTILPGEEAYKAGAGMAQSIDGVLQFQIFGIHLIGADICGFNRNSDEELCNRWMMLGAFLPFMRNHNTIGAIAQEPFRWDSVANASRIAINKRYEILPSLYSHMAQSAESGEPAVRALWYEFDEVFEQTKDYAHQFLFGDDLLVSPVLEPNVTQIKALFPNAGGKWRNVFSYEALDVEYNKNVTVDAALSTINVHLRPGKVLLTHSKPAYTVYETAQSPYGLIVNLNDQGEAKQTFYLDDGMTPAPTPNSTLTVSAGNNSVNGSIEGEYKAQQNLTYVVVLDVKQKPTQVMMGGNKTEFSWDQQKTLLNVTGLNADLNGSGRFRGLRLELSLLCED</sequence>
<accession>P29064</accession>
<dbReference type="EC" id="3.2.1.20"/>
<dbReference type="EMBL" id="X56024">
    <property type="protein sequence ID" value="CAA39501.1"/>
    <property type="molecule type" value="Genomic_DNA"/>
</dbReference>
<dbReference type="PIR" id="S19686">
    <property type="entry name" value="S19686"/>
</dbReference>
<dbReference type="SMR" id="P29064"/>
<dbReference type="CAZy" id="GH31">
    <property type="family name" value="Glycoside Hydrolase Family 31"/>
</dbReference>
<dbReference type="GO" id="GO:0004558">
    <property type="term" value="F:alpha-1,4-glucosidase activity"/>
    <property type="evidence" value="ECO:0007669"/>
    <property type="project" value="UniProtKB-EC"/>
</dbReference>
<dbReference type="GO" id="GO:0030246">
    <property type="term" value="F:carbohydrate binding"/>
    <property type="evidence" value="ECO:0007669"/>
    <property type="project" value="InterPro"/>
</dbReference>
<dbReference type="GO" id="GO:0005975">
    <property type="term" value="P:carbohydrate metabolic process"/>
    <property type="evidence" value="ECO:0007669"/>
    <property type="project" value="InterPro"/>
</dbReference>
<dbReference type="CDD" id="cd06602">
    <property type="entry name" value="GH31_MGAM_SI_GAA"/>
    <property type="match status" value="1"/>
</dbReference>
<dbReference type="CDD" id="cd14752">
    <property type="entry name" value="GH31_N"/>
    <property type="match status" value="1"/>
</dbReference>
<dbReference type="Gene3D" id="3.20.20.80">
    <property type="entry name" value="Glycosidases"/>
    <property type="match status" value="2"/>
</dbReference>
<dbReference type="Gene3D" id="2.60.40.1760">
    <property type="entry name" value="glycosyl hydrolase (family 31)"/>
    <property type="match status" value="1"/>
</dbReference>
<dbReference type="Gene3D" id="2.60.40.1180">
    <property type="entry name" value="Golgi alpha-mannosidase II"/>
    <property type="match status" value="2"/>
</dbReference>
<dbReference type="InterPro" id="IPR011013">
    <property type="entry name" value="Gal_mutarotase_sf_dom"/>
</dbReference>
<dbReference type="InterPro" id="IPR030458">
    <property type="entry name" value="Glyco_hydro_31_AS"/>
</dbReference>
<dbReference type="InterPro" id="IPR048395">
    <property type="entry name" value="Glyco_hydro_31_C"/>
</dbReference>
<dbReference type="InterPro" id="IPR030459">
    <property type="entry name" value="Glyco_hydro_31_CS"/>
</dbReference>
<dbReference type="InterPro" id="IPR000322">
    <property type="entry name" value="Glyco_hydro_31_TIM"/>
</dbReference>
<dbReference type="InterPro" id="IPR013780">
    <property type="entry name" value="Glyco_hydro_b"/>
</dbReference>
<dbReference type="InterPro" id="IPR017853">
    <property type="entry name" value="Glycoside_hydrolase_SF"/>
</dbReference>
<dbReference type="PANTHER" id="PTHR22762">
    <property type="entry name" value="ALPHA-GLUCOSIDASE"/>
    <property type="match status" value="1"/>
</dbReference>
<dbReference type="PANTHER" id="PTHR22762:SF133">
    <property type="entry name" value="P-TYPE DOMAIN-CONTAINING PROTEIN"/>
    <property type="match status" value="1"/>
</dbReference>
<dbReference type="Pfam" id="PF01055">
    <property type="entry name" value="Glyco_hydro_31_2nd"/>
    <property type="match status" value="1"/>
</dbReference>
<dbReference type="Pfam" id="PF21365">
    <property type="entry name" value="Glyco_hydro_31_3rd"/>
    <property type="match status" value="1"/>
</dbReference>
<dbReference type="SUPFAM" id="SSF51445">
    <property type="entry name" value="(Trans)glycosidases"/>
    <property type="match status" value="1"/>
</dbReference>
<dbReference type="SUPFAM" id="SSF74650">
    <property type="entry name" value="Galactose mutarotase-like"/>
    <property type="match status" value="1"/>
</dbReference>
<dbReference type="SUPFAM" id="SSF51011">
    <property type="entry name" value="Glycosyl hydrolase domain"/>
    <property type="match status" value="1"/>
</dbReference>
<dbReference type="PROSITE" id="PS00129">
    <property type="entry name" value="GLYCOSYL_HYDROL_F31_1"/>
    <property type="match status" value="1"/>
</dbReference>
<dbReference type="PROSITE" id="PS00707">
    <property type="entry name" value="GLYCOSYL_HYDROL_F31_2"/>
    <property type="match status" value="1"/>
</dbReference>
<reference key="1">
    <citation type="journal article" date="1991" name="Eur. J. Biochem.">
        <title>Primary structure and processing of the Candida tsukubaensis alpha-glucosidase. Homology with the rabbit intestinal sucrase-isomaltase complex and human lysosomal alpha-glucosidase.</title>
        <authorList>
            <person name="Kinsella B.T."/>
            <person name="Hogan S."/>
            <person name="Larkin A."/>
            <person name="Cantwell B.A."/>
        </authorList>
    </citation>
    <scope>NUCLEOTIDE SEQUENCE [GENOMIC DNA]</scope>
    <scope>PROTEIN SEQUENCE OF 36-49 AND 613-634</scope>
    <source>
        <strain>CBS 6389</strain>
    </source>
</reference>
<keyword id="KW-0903">Direct protein sequencing</keyword>
<keyword id="KW-0325">Glycoprotein</keyword>
<keyword id="KW-0326">Glycosidase</keyword>
<keyword id="KW-0378">Hydrolase</keyword>
<keyword id="KW-0732">Signal</keyword>
<keyword id="KW-0865">Zymogen</keyword>
<name>AGLU_CANTS</name>